<comment type="function">
    <text evidence="1">Produces ATP from ADP in the presence of a proton gradient across the membrane.</text>
</comment>
<comment type="similarity">
    <text evidence="1">Belongs to the V-ATPase E subunit family.</text>
</comment>
<reference key="1">
    <citation type="journal article" date="2007" name="PLoS ONE">
        <title>Analysis of the neurotoxin complex genes in Clostridium botulinum A1-A4 and B1 strains: BoNT/A3, /Ba4 and /B1 clusters are located within plasmids.</title>
        <authorList>
            <person name="Smith T.J."/>
            <person name="Hill K.K."/>
            <person name="Foley B.T."/>
            <person name="Detter J.C."/>
            <person name="Munk A.C."/>
            <person name="Bruce D.C."/>
            <person name="Doggett N.A."/>
            <person name="Smith L.A."/>
            <person name="Marks J.D."/>
            <person name="Xie G."/>
            <person name="Brettin T.S."/>
        </authorList>
    </citation>
    <scope>NUCLEOTIDE SEQUENCE [LARGE SCALE GENOMIC DNA]</scope>
    <source>
        <strain>Okra / Type B1</strain>
    </source>
</reference>
<dbReference type="EMBL" id="CP000939">
    <property type="protein sequence ID" value="ACA44835.1"/>
    <property type="molecule type" value="Genomic_DNA"/>
</dbReference>
<dbReference type="RefSeq" id="WP_003401371.1">
    <property type="nucleotide sequence ID" value="NC_010516.1"/>
</dbReference>
<dbReference type="SMR" id="B1IJN1"/>
<dbReference type="KEGG" id="cbb:CLD_1937"/>
<dbReference type="HOGENOM" id="CLU_105846_0_0_9"/>
<dbReference type="Proteomes" id="UP000008541">
    <property type="component" value="Chromosome"/>
</dbReference>
<dbReference type="GO" id="GO:0033178">
    <property type="term" value="C:proton-transporting two-sector ATPase complex, catalytic domain"/>
    <property type="evidence" value="ECO:0007669"/>
    <property type="project" value="InterPro"/>
</dbReference>
<dbReference type="GO" id="GO:0005524">
    <property type="term" value="F:ATP binding"/>
    <property type="evidence" value="ECO:0007669"/>
    <property type="project" value="UniProtKB-UniRule"/>
</dbReference>
<dbReference type="GO" id="GO:0046933">
    <property type="term" value="F:proton-transporting ATP synthase activity, rotational mechanism"/>
    <property type="evidence" value="ECO:0007669"/>
    <property type="project" value="UniProtKB-UniRule"/>
</dbReference>
<dbReference type="GO" id="GO:0046961">
    <property type="term" value="F:proton-transporting ATPase activity, rotational mechanism"/>
    <property type="evidence" value="ECO:0007669"/>
    <property type="project" value="InterPro"/>
</dbReference>
<dbReference type="GO" id="GO:0042777">
    <property type="term" value="P:proton motive force-driven plasma membrane ATP synthesis"/>
    <property type="evidence" value="ECO:0007669"/>
    <property type="project" value="UniProtKB-UniRule"/>
</dbReference>
<dbReference type="Gene3D" id="3.30.2320.30">
    <property type="entry name" value="ATP synthase, E subunit, C-terminal"/>
    <property type="match status" value="1"/>
</dbReference>
<dbReference type="Gene3D" id="1.20.5.620">
    <property type="entry name" value="F1F0 ATP synthase subunit B, membrane domain"/>
    <property type="match status" value="1"/>
</dbReference>
<dbReference type="HAMAP" id="MF_00311">
    <property type="entry name" value="ATP_synth_E_arch"/>
    <property type="match status" value="1"/>
</dbReference>
<dbReference type="InterPro" id="IPR028987">
    <property type="entry name" value="ATP_synth_B-like_membr_sf"/>
</dbReference>
<dbReference type="InterPro" id="IPR038495">
    <property type="entry name" value="ATPase_E_C"/>
</dbReference>
<dbReference type="InterPro" id="IPR002842">
    <property type="entry name" value="ATPase_V1_Esu"/>
</dbReference>
<dbReference type="Pfam" id="PF01991">
    <property type="entry name" value="vATP-synt_E"/>
    <property type="match status" value="1"/>
</dbReference>
<dbReference type="SUPFAM" id="SSF81573">
    <property type="entry name" value="F1F0 ATP synthase subunit B, membrane domain"/>
    <property type="match status" value="1"/>
</dbReference>
<dbReference type="SUPFAM" id="SSF160527">
    <property type="entry name" value="V-type ATPase subunit E-like"/>
    <property type="match status" value="1"/>
</dbReference>
<organism>
    <name type="scientific">Clostridium botulinum (strain Okra / Type B1)</name>
    <dbReference type="NCBI Taxonomy" id="498213"/>
    <lineage>
        <taxon>Bacteria</taxon>
        <taxon>Bacillati</taxon>
        <taxon>Bacillota</taxon>
        <taxon>Clostridia</taxon>
        <taxon>Eubacteriales</taxon>
        <taxon>Clostridiaceae</taxon>
        <taxon>Clostridium</taxon>
    </lineage>
</organism>
<protein>
    <recommendedName>
        <fullName evidence="1">V-type proton ATPase subunit E</fullName>
    </recommendedName>
    <alternativeName>
        <fullName evidence="1">V-ATPase subunit E</fullName>
    </alternativeName>
</protein>
<accession>B1IJN1</accession>
<proteinExistence type="inferred from homology"/>
<evidence type="ECO:0000255" key="1">
    <source>
        <dbReference type="HAMAP-Rule" id="MF_00311"/>
    </source>
</evidence>
<keyword id="KW-0066">ATP synthesis</keyword>
<keyword id="KW-0375">Hydrogen ion transport</keyword>
<keyword id="KW-0406">Ion transport</keyword>
<keyword id="KW-0813">Transport</keyword>
<feature type="chain" id="PRO_1000115675" description="V-type proton ATPase subunit E">
    <location>
        <begin position="1"/>
        <end position="199"/>
    </location>
</feature>
<gene>
    <name evidence="1" type="primary">atpE</name>
    <name type="ordered locus">CLD_1937</name>
</gene>
<sequence>MSNLENLTSKIIEDANKEAEKLLSEAKKEENEIVDEKVKKANKAKEQIIEKTKREAKTKAERVISNTHLKVRNNKLEAKQEMINKVFDEAVIKLQNLPQEEYLNFIKNSILSLDIEGDEEIIVSPNDKNKIDISFILTLNNKLKAKGKKDLLKISNENRNIKGGFILYKNGIEINNSFEALVDSLRDELEQEIIEALFS</sequence>
<name>VATE_CLOBK</name>